<name>OHRL1_STAS1</name>
<gene>
    <name type="ordered locus">SSP1874</name>
</gene>
<feature type="chain" id="PRO_0000288969" description="Organic hydroperoxide resistance protein-like 1">
    <location>
        <begin position="1"/>
        <end position="141"/>
    </location>
</feature>
<feature type="region of interest" description="Disordered" evidence="1">
    <location>
        <begin position="1"/>
        <end position="20"/>
    </location>
</feature>
<comment type="similarity">
    <text evidence="2">Belongs to the OsmC/Ohr family.</text>
</comment>
<dbReference type="EMBL" id="AP008934">
    <property type="protein sequence ID" value="BAE19019.1"/>
    <property type="molecule type" value="Genomic_DNA"/>
</dbReference>
<dbReference type="RefSeq" id="WP_011303551.1">
    <property type="nucleotide sequence ID" value="NZ_MTGA01000039.1"/>
</dbReference>
<dbReference type="SMR" id="Q49W40"/>
<dbReference type="GeneID" id="3615033"/>
<dbReference type="KEGG" id="ssp:SSP1874"/>
<dbReference type="eggNOG" id="COG1764">
    <property type="taxonomic scope" value="Bacteria"/>
</dbReference>
<dbReference type="HOGENOM" id="CLU_106355_2_1_9"/>
<dbReference type="OrthoDB" id="9797508at2"/>
<dbReference type="Proteomes" id="UP000006371">
    <property type="component" value="Chromosome"/>
</dbReference>
<dbReference type="GO" id="GO:0006979">
    <property type="term" value="P:response to oxidative stress"/>
    <property type="evidence" value="ECO:0007669"/>
    <property type="project" value="InterPro"/>
</dbReference>
<dbReference type="Gene3D" id="2.20.25.10">
    <property type="match status" value="1"/>
</dbReference>
<dbReference type="Gene3D" id="3.30.300.20">
    <property type="match status" value="1"/>
</dbReference>
<dbReference type="InterPro" id="IPR015946">
    <property type="entry name" value="KH_dom-like_a/b"/>
</dbReference>
<dbReference type="InterPro" id="IPR019953">
    <property type="entry name" value="OHR"/>
</dbReference>
<dbReference type="InterPro" id="IPR003718">
    <property type="entry name" value="OsmC/Ohr_fam"/>
</dbReference>
<dbReference type="InterPro" id="IPR036102">
    <property type="entry name" value="OsmC/Ohrsf"/>
</dbReference>
<dbReference type="NCBIfam" id="TIGR03561">
    <property type="entry name" value="organ_hyd_perox"/>
    <property type="match status" value="1"/>
</dbReference>
<dbReference type="PANTHER" id="PTHR33797">
    <property type="entry name" value="ORGANIC HYDROPEROXIDE RESISTANCE PROTEIN-LIKE"/>
    <property type="match status" value="1"/>
</dbReference>
<dbReference type="PANTHER" id="PTHR33797:SF2">
    <property type="entry name" value="ORGANIC HYDROPEROXIDE RESISTANCE PROTEIN-LIKE"/>
    <property type="match status" value="1"/>
</dbReference>
<dbReference type="Pfam" id="PF02566">
    <property type="entry name" value="OsmC"/>
    <property type="match status" value="1"/>
</dbReference>
<dbReference type="SUPFAM" id="SSF82784">
    <property type="entry name" value="OsmC-like"/>
    <property type="match status" value="1"/>
</dbReference>
<protein>
    <recommendedName>
        <fullName>Organic hydroperoxide resistance protein-like 1</fullName>
    </recommendedName>
</protein>
<evidence type="ECO:0000256" key="1">
    <source>
        <dbReference type="SAM" id="MobiDB-lite"/>
    </source>
</evidence>
<evidence type="ECO:0000305" key="2"/>
<sequence length="141" mass="15237">MAVNYETKATNTGGRNGHVQTDDKAIDVAIVPPAQADAEKGTNPEQLFAAGYASCFNGAFDLILKQNKVRGAEPEVTLTVRLEDDPEAESPKLSVSIDAKVKNVLSQEEAEKYLQDAHEFCPYSKATRGNIEVDLNVAVVD</sequence>
<accession>Q49W40</accession>
<proteinExistence type="inferred from homology"/>
<keyword id="KW-1185">Reference proteome</keyword>
<reference key="1">
    <citation type="journal article" date="2005" name="Proc. Natl. Acad. Sci. U.S.A.">
        <title>Whole genome sequence of Staphylococcus saprophyticus reveals the pathogenesis of uncomplicated urinary tract infection.</title>
        <authorList>
            <person name="Kuroda M."/>
            <person name="Yamashita A."/>
            <person name="Hirakawa H."/>
            <person name="Kumano M."/>
            <person name="Morikawa K."/>
            <person name="Higashide M."/>
            <person name="Maruyama A."/>
            <person name="Inose Y."/>
            <person name="Matoba K."/>
            <person name="Toh H."/>
            <person name="Kuhara S."/>
            <person name="Hattori M."/>
            <person name="Ohta T."/>
        </authorList>
    </citation>
    <scope>NUCLEOTIDE SEQUENCE [LARGE SCALE GENOMIC DNA]</scope>
    <source>
        <strain>ATCC 15305 / DSM 20229 / NCIMB 8711 / NCTC 7292 / S-41</strain>
    </source>
</reference>
<organism>
    <name type="scientific">Staphylococcus saprophyticus subsp. saprophyticus (strain ATCC 15305 / DSM 20229 / NCIMB 8711 / NCTC 7292 / S-41)</name>
    <dbReference type="NCBI Taxonomy" id="342451"/>
    <lineage>
        <taxon>Bacteria</taxon>
        <taxon>Bacillati</taxon>
        <taxon>Bacillota</taxon>
        <taxon>Bacilli</taxon>
        <taxon>Bacillales</taxon>
        <taxon>Staphylococcaceae</taxon>
        <taxon>Staphylococcus</taxon>
    </lineage>
</organism>